<dbReference type="EC" id="6.3.2.4" evidence="2"/>
<dbReference type="EMBL" id="AE008917">
    <property type="protein sequence ID" value="AAL51763.1"/>
    <property type="molecule type" value="Genomic_DNA"/>
</dbReference>
<dbReference type="PIR" id="AH3324">
    <property type="entry name" value="AH3324"/>
</dbReference>
<dbReference type="SMR" id="Q8YI63"/>
<dbReference type="KEGG" id="bme:BMEI0582"/>
<dbReference type="eggNOG" id="COG1181">
    <property type="taxonomic scope" value="Bacteria"/>
</dbReference>
<dbReference type="UniPathway" id="UPA00219"/>
<dbReference type="Proteomes" id="UP000000419">
    <property type="component" value="Chromosome I"/>
</dbReference>
<dbReference type="GO" id="GO:0005737">
    <property type="term" value="C:cytoplasm"/>
    <property type="evidence" value="ECO:0007669"/>
    <property type="project" value="UniProtKB-SubCell"/>
</dbReference>
<dbReference type="GO" id="GO:0005524">
    <property type="term" value="F:ATP binding"/>
    <property type="evidence" value="ECO:0007669"/>
    <property type="project" value="UniProtKB-KW"/>
</dbReference>
<dbReference type="GO" id="GO:0008716">
    <property type="term" value="F:D-alanine-D-alanine ligase activity"/>
    <property type="evidence" value="ECO:0007669"/>
    <property type="project" value="UniProtKB-UniRule"/>
</dbReference>
<dbReference type="GO" id="GO:0046872">
    <property type="term" value="F:metal ion binding"/>
    <property type="evidence" value="ECO:0007669"/>
    <property type="project" value="UniProtKB-KW"/>
</dbReference>
<dbReference type="GO" id="GO:0071555">
    <property type="term" value="P:cell wall organization"/>
    <property type="evidence" value="ECO:0007669"/>
    <property type="project" value="UniProtKB-KW"/>
</dbReference>
<dbReference type="GO" id="GO:0009252">
    <property type="term" value="P:peptidoglycan biosynthetic process"/>
    <property type="evidence" value="ECO:0007669"/>
    <property type="project" value="UniProtKB-UniRule"/>
</dbReference>
<dbReference type="GO" id="GO:0008360">
    <property type="term" value="P:regulation of cell shape"/>
    <property type="evidence" value="ECO:0007669"/>
    <property type="project" value="UniProtKB-KW"/>
</dbReference>
<dbReference type="Gene3D" id="3.40.50.20">
    <property type="match status" value="1"/>
</dbReference>
<dbReference type="Gene3D" id="3.30.1490.20">
    <property type="entry name" value="ATP-grasp fold, A domain"/>
    <property type="match status" value="1"/>
</dbReference>
<dbReference type="Gene3D" id="3.30.470.20">
    <property type="entry name" value="ATP-grasp fold, B domain"/>
    <property type="match status" value="1"/>
</dbReference>
<dbReference type="HAMAP" id="MF_00047">
    <property type="entry name" value="Dala_Dala_lig"/>
    <property type="match status" value="1"/>
</dbReference>
<dbReference type="InterPro" id="IPR011761">
    <property type="entry name" value="ATP-grasp"/>
</dbReference>
<dbReference type="InterPro" id="IPR013815">
    <property type="entry name" value="ATP_grasp_subdomain_1"/>
</dbReference>
<dbReference type="InterPro" id="IPR000291">
    <property type="entry name" value="D-Ala_lig_Van_CS"/>
</dbReference>
<dbReference type="InterPro" id="IPR005905">
    <property type="entry name" value="D_ala_D_ala"/>
</dbReference>
<dbReference type="InterPro" id="IPR011095">
    <property type="entry name" value="Dala_Dala_lig_C"/>
</dbReference>
<dbReference type="InterPro" id="IPR011127">
    <property type="entry name" value="Dala_Dala_lig_N"/>
</dbReference>
<dbReference type="InterPro" id="IPR016185">
    <property type="entry name" value="PreATP-grasp_dom_sf"/>
</dbReference>
<dbReference type="NCBIfam" id="TIGR01205">
    <property type="entry name" value="D_ala_D_alaTIGR"/>
    <property type="match status" value="1"/>
</dbReference>
<dbReference type="NCBIfam" id="NF002378">
    <property type="entry name" value="PRK01372.1"/>
    <property type="match status" value="1"/>
</dbReference>
<dbReference type="PANTHER" id="PTHR23132">
    <property type="entry name" value="D-ALANINE--D-ALANINE LIGASE"/>
    <property type="match status" value="1"/>
</dbReference>
<dbReference type="PANTHER" id="PTHR23132:SF23">
    <property type="entry name" value="D-ALANINE--D-ALANINE LIGASE B"/>
    <property type="match status" value="1"/>
</dbReference>
<dbReference type="Pfam" id="PF07478">
    <property type="entry name" value="Dala_Dala_lig_C"/>
    <property type="match status" value="1"/>
</dbReference>
<dbReference type="Pfam" id="PF01820">
    <property type="entry name" value="Dala_Dala_lig_N"/>
    <property type="match status" value="1"/>
</dbReference>
<dbReference type="PIRSF" id="PIRSF039102">
    <property type="entry name" value="Ddl/VanB"/>
    <property type="match status" value="1"/>
</dbReference>
<dbReference type="SUPFAM" id="SSF56059">
    <property type="entry name" value="Glutathione synthetase ATP-binding domain-like"/>
    <property type="match status" value="1"/>
</dbReference>
<dbReference type="SUPFAM" id="SSF52440">
    <property type="entry name" value="PreATP-grasp domain"/>
    <property type="match status" value="1"/>
</dbReference>
<dbReference type="PROSITE" id="PS50975">
    <property type="entry name" value="ATP_GRASP"/>
    <property type="match status" value="1"/>
</dbReference>
<dbReference type="PROSITE" id="PS00843">
    <property type="entry name" value="DALA_DALA_LIGASE_1"/>
    <property type="match status" value="1"/>
</dbReference>
<dbReference type="PROSITE" id="PS00844">
    <property type="entry name" value="DALA_DALA_LIGASE_2"/>
    <property type="match status" value="1"/>
</dbReference>
<keyword id="KW-0067">ATP-binding</keyword>
<keyword id="KW-0133">Cell shape</keyword>
<keyword id="KW-0961">Cell wall biogenesis/degradation</keyword>
<keyword id="KW-0963">Cytoplasm</keyword>
<keyword id="KW-0436">Ligase</keyword>
<keyword id="KW-0460">Magnesium</keyword>
<keyword id="KW-0464">Manganese</keyword>
<keyword id="KW-0479">Metal-binding</keyword>
<keyword id="KW-0547">Nucleotide-binding</keyword>
<keyword id="KW-0573">Peptidoglycan synthesis</keyword>
<reference key="1">
    <citation type="journal article" date="2002" name="Proc. Natl. Acad. Sci. U.S.A.">
        <title>The genome sequence of the facultative intracellular pathogen Brucella melitensis.</title>
        <authorList>
            <person name="DelVecchio V.G."/>
            <person name="Kapatral V."/>
            <person name="Redkar R.J."/>
            <person name="Patra G."/>
            <person name="Mujer C."/>
            <person name="Los T."/>
            <person name="Ivanova N."/>
            <person name="Anderson I."/>
            <person name="Bhattacharyya A."/>
            <person name="Lykidis A."/>
            <person name="Reznik G."/>
            <person name="Jablonski L."/>
            <person name="Larsen N."/>
            <person name="D'Souza M."/>
            <person name="Bernal A."/>
            <person name="Mazur M."/>
            <person name="Goltsman E."/>
            <person name="Selkov E."/>
            <person name="Elzer P.H."/>
            <person name="Hagius S."/>
            <person name="O'Callaghan D."/>
            <person name="Letesson J.-J."/>
            <person name="Haselkorn R."/>
            <person name="Kyrpides N.C."/>
            <person name="Overbeek R."/>
        </authorList>
    </citation>
    <scope>NUCLEOTIDE SEQUENCE [LARGE SCALE GENOMIC DNA]</scope>
    <source>
        <strain>ATCC 23456 / CCUG 17765 / NCTC 10094 / 16M</strain>
    </source>
</reference>
<name>DDLB_BRUME</name>
<sequence length="315" mass="34269">MRRGEARMTGKHVAVLMGGFSSERSVSLSSGVACATTLEECGYRVTRIDVDRNVASILVELKPDVVFNALHGPFGEDGAIQGVLEYLQIPYTHSGVLASALAMDKDRAKKVAAAAGVVVAPSRLMNRFDIGSQHPMKPPYVVKPVREGSSFGVVIVKEDQPHPPQVIGSADWKYGDEVMVEGYIAGRELTCAVMGDRAMDVCEIMPVGYQFYDYDSKYVAGASTHVCPAKILPNIYQKIQTMALTAHRAIGCRGVSRSDFRFDDRFSEEGEVVWLEINTQPGMTPTSLVPDIAKAAGISFAELLSWMVEDASCLR</sequence>
<protein>
    <recommendedName>
        <fullName evidence="2">D-alanine--D-alanine ligase B</fullName>
        <ecNumber evidence="2">6.3.2.4</ecNumber>
    </recommendedName>
    <alternativeName>
        <fullName evidence="2">D-Ala-D-Ala ligase B</fullName>
    </alternativeName>
    <alternativeName>
        <fullName evidence="2">D-alanylalanine synthetase B</fullName>
    </alternativeName>
</protein>
<proteinExistence type="inferred from homology"/>
<accession>Q8YI63</accession>
<evidence type="ECO:0000250" key="1"/>
<evidence type="ECO:0000255" key="2">
    <source>
        <dbReference type="HAMAP-Rule" id="MF_00047"/>
    </source>
</evidence>
<feature type="chain" id="PRO_0000177795" description="D-alanine--D-alanine ligase B">
    <location>
        <begin position="1"/>
        <end position="315"/>
    </location>
</feature>
<feature type="domain" description="ATP-grasp" evidence="2">
    <location>
        <begin position="109"/>
        <end position="309"/>
    </location>
</feature>
<feature type="binding site" evidence="2">
    <location>
        <begin position="135"/>
        <end position="190"/>
    </location>
    <ligand>
        <name>ATP</name>
        <dbReference type="ChEBI" id="CHEBI:30616"/>
    </ligand>
</feature>
<feature type="binding site" evidence="2">
    <location>
        <position position="259"/>
    </location>
    <ligand>
        <name>Mg(2+)</name>
        <dbReference type="ChEBI" id="CHEBI:18420"/>
        <label>1</label>
    </ligand>
</feature>
<feature type="binding site" evidence="2">
    <location>
        <position position="276"/>
    </location>
    <ligand>
        <name>Mg(2+)</name>
        <dbReference type="ChEBI" id="CHEBI:18420"/>
        <label>1</label>
    </ligand>
</feature>
<feature type="binding site" evidence="2">
    <location>
        <position position="276"/>
    </location>
    <ligand>
        <name>Mg(2+)</name>
        <dbReference type="ChEBI" id="CHEBI:18420"/>
        <label>2</label>
    </ligand>
</feature>
<feature type="binding site" evidence="2">
    <location>
        <position position="278"/>
    </location>
    <ligand>
        <name>Mg(2+)</name>
        <dbReference type="ChEBI" id="CHEBI:18420"/>
        <label>2</label>
    </ligand>
</feature>
<gene>
    <name evidence="2" type="primary">ddlB</name>
    <name type="ordered locus">BMEI0582</name>
</gene>
<organism>
    <name type="scientific">Brucella melitensis biotype 1 (strain ATCC 23456 / CCUG 17765 / NCTC 10094 / 16M)</name>
    <dbReference type="NCBI Taxonomy" id="224914"/>
    <lineage>
        <taxon>Bacteria</taxon>
        <taxon>Pseudomonadati</taxon>
        <taxon>Pseudomonadota</taxon>
        <taxon>Alphaproteobacteria</taxon>
        <taxon>Hyphomicrobiales</taxon>
        <taxon>Brucellaceae</taxon>
        <taxon>Brucella/Ochrobactrum group</taxon>
        <taxon>Brucella</taxon>
    </lineage>
</organism>
<comment type="function">
    <text evidence="2">Cell wall formation.</text>
</comment>
<comment type="catalytic activity">
    <reaction evidence="2">
        <text>2 D-alanine + ATP = D-alanyl-D-alanine + ADP + phosphate + H(+)</text>
        <dbReference type="Rhea" id="RHEA:11224"/>
        <dbReference type="ChEBI" id="CHEBI:15378"/>
        <dbReference type="ChEBI" id="CHEBI:30616"/>
        <dbReference type="ChEBI" id="CHEBI:43474"/>
        <dbReference type="ChEBI" id="CHEBI:57416"/>
        <dbReference type="ChEBI" id="CHEBI:57822"/>
        <dbReference type="ChEBI" id="CHEBI:456216"/>
        <dbReference type="EC" id="6.3.2.4"/>
    </reaction>
</comment>
<comment type="cofactor">
    <cofactor evidence="1">
        <name>Mg(2+)</name>
        <dbReference type="ChEBI" id="CHEBI:18420"/>
    </cofactor>
    <cofactor evidence="1">
        <name>Mn(2+)</name>
        <dbReference type="ChEBI" id="CHEBI:29035"/>
    </cofactor>
    <text evidence="1">Binds 2 magnesium or manganese ions per subunit.</text>
</comment>
<comment type="pathway">
    <text evidence="2">Cell wall biogenesis; peptidoglycan biosynthesis.</text>
</comment>
<comment type="subcellular location">
    <subcellularLocation>
        <location evidence="2">Cytoplasm</location>
    </subcellularLocation>
</comment>
<comment type="similarity">
    <text evidence="2">Belongs to the D-alanine--D-alanine ligase family.</text>
</comment>